<proteinExistence type="evidence at protein level"/>
<comment type="function">
    <text evidence="4 5 7">RNA-binding protein required for assembly of the holoenzyme telomerase ribonucleoprotein (RNP) complex (PubMed:11080168, PubMed:12665556, PubMed:15208446). Specifically binds telomerase RNA and promotes its assembly with catalytic subunit p123, thereby stimulating enzymatic activity and processivity of p123 (PubMed:15208446). Telomerase is a ribonucleoprotein enzyme essential that copies new telomeric repeats onto chromosome ends and functions to maintain cell division (PubMed:11080168, PubMed:12665556).</text>
</comment>
<comment type="subunit">
    <text evidence="4 5">Component of the telomerase holoenzyme complex composed minimally of the catalytic subunit p123 and the telomerase RNA template component.</text>
</comment>
<comment type="subcellular location">
    <subcellularLocation>
        <location evidence="5 6">Nucleus</location>
    </subcellularLocation>
    <subcellularLocation>
        <location evidence="10">Chromosome</location>
        <location evidence="10">Telomere</location>
    </subcellularLocation>
    <text evidence="5 6">Localizes to the macronucleus.</text>
</comment>
<comment type="alternative products">
    <event type="ribosomal frameshifting"/>
    <isoform>
        <id>Q9GSF8-1</id>
        <name>1</name>
        <sequence type="displayed"/>
    </isoform>
    <text evidence="4">A ribosomal frameshift occurs between the codons for Met-86 and Lys-88.</text>
</comment>
<comment type="PTM">
    <text evidence="4">The mature form of the protein is a protein of 43 kDa, which is derived from a 51 kDa precursor by proteolytic cleavage.</text>
</comment>
<comment type="similarity">
    <text evidence="10">Belongs to the LARP7 family.</text>
</comment>
<sequence length="437" mass="50722">MEMDIDLDDIENLLPNTFNKYSSSCSDKKGCKTLKSGSKSPSLTIPKLQKQLEFYFSDANLYNDSFLRKLVLKSGEQRVEIETLLMFKKIRSLLKEHYGENYLILKANNDEYIKFICECVKGSRYIRLTKDKLAIKRKKKFDNRTAEELIAFTIRIDGELPSLETIEKAVYNCRNRSSESSDVNKPNKPCKFNGIYVKSFGTNAHCIYIGFLKHRYTECFRDCFSLQQITCFDYSCSSLISLKEAGEMKRRLKKEISKFVDSSVTGINNKNISNEKEEELSQSCFLKISKIPAGSKKYQIREALDCDRPSYIQYDDKETAVIRFKNSAMRTKFLESRNGAEILIKKNCVDIAKESNSKSFVNKYYQSCLIEEIDEATAQKIIKEIKDQRSSIDEIKAELKLDNKKYKPWSKYCGRKRRPVSKRKNKAINKMSTEVKK</sequence>
<name>LARP7_EUPAE</name>
<dbReference type="EMBL" id="AF307939">
    <property type="protein sequence ID" value="AAG33619.1"/>
    <property type="molecule type" value="Genomic_DNA"/>
</dbReference>
<dbReference type="SMR" id="Q9GSF8"/>
<dbReference type="GO" id="GO:0000781">
    <property type="term" value="C:chromosome, telomeric region"/>
    <property type="evidence" value="ECO:0007669"/>
    <property type="project" value="UniProtKB-SubCell"/>
</dbReference>
<dbReference type="GO" id="GO:0031039">
    <property type="term" value="C:macronucleus"/>
    <property type="evidence" value="ECO:0000314"/>
    <property type="project" value="UniProtKB"/>
</dbReference>
<dbReference type="GO" id="GO:0005697">
    <property type="term" value="C:telomerase holoenzyme complex"/>
    <property type="evidence" value="ECO:0000314"/>
    <property type="project" value="UniProtKB"/>
</dbReference>
<dbReference type="GO" id="GO:0070034">
    <property type="term" value="F:telomerase RNA binding"/>
    <property type="evidence" value="ECO:0000314"/>
    <property type="project" value="UniProtKB"/>
</dbReference>
<dbReference type="GO" id="GO:1904868">
    <property type="term" value="P:telomerase catalytic core complex assembly"/>
    <property type="evidence" value="ECO:0000314"/>
    <property type="project" value="UniProtKB"/>
</dbReference>
<dbReference type="GO" id="GO:0075523">
    <property type="term" value="P:viral translational frameshifting"/>
    <property type="evidence" value="ECO:0007669"/>
    <property type="project" value="UniProtKB-KW"/>
</dbReference>
<dbReference type="CDD" id="cd07323">
    <property type="entry name" value="LAM"/>
    <property type="match status" value="1"/>
</dbReference>
<dbReference type="Gene3D" id="1.10.10.10">
    <property type="entry name" value="Winged helix-like DNA-binding domain superfamily/Winged helix DNA-binding domain"/>
    <property type="match status" value="1"/>
</dbReference>
<dbReference type="InterPro" id="IPR045180">
    <property type="entry name" value="La_dom_prot"/>
</dbReference>
<dbReference type="InterPro" id="IPR006630">
    <property type="entry name" value="La_HTH"/>
</dbReference>
<dbReference type="InterPro" id="IPR014886">
    <property type="entry name" value="La_xRRM"/>
</dbReference>
<dbReference type="InterPro" id="IPR036388">
    <property type="entry name" value="WH-like_DNA-bd_sf"/>
</dbReference>
<dbReference type="InterPro" id="IPR036390">
    <property type="entry name" value="WH_DNA-bd_sf"/>
</dbReference>
<dbReference type="PANTHER" id="PTHR22792:SF62">
    <property type="entry name" value="LA-RELATED PROTEIN 7"/>
    <property type="match status" value="1"/>
</dbReference>
<dbReference type="PANTHER" id="PTHR22792">
    <property type="entry name" value="LUPUS LA PROTEIN-RELATED"/>
    <property type="match status" value="1"/>
</dbReference>
<dbReference type="Pfam" id="PF05383">
    <property type="entry name" value="La"/>
    <property type="match status" value="1"/>
</dbReference>
<dbReference type="SMART" id="SM00715">
    <property type="entry name" value="LA"/>
    <property type="match status" value="1"/>
</dbReference>
<dbReference type="SUPFAM" id="SSF46785">
    <property type="entry name" value="Winged helix' DNA-binding domain"/>
    <property type="match status" value="1"/>
</dbReference>
<dbReference type="PROSITE" id="PS50961">
    <property type="entry name" value="HTH_LA"/>
    <property type="match status" value="1"/>
</dbReference>
<dbReference type="PROSITE" id="PS51939">
    <property type="entry name" value="XRRM"/>
    <property type="match status" value="1"/>
</dbReference>
<accession>Q9GSF8</accession>
<organism>
    <name type="scientific">Euplotes aediculatus</name>
    <name type="common">Ciliate</name>
    <dbReference type="NCBI Taxonomy" id="5940"/>
    <lineage>
        <taxon>Eukaryota</taxon>
        <taxon>Sar</taxon>
        <taxon>Alveolata</taxon>
        <taxon>Ciliophora</taxon>
        <taxon>Intramacronucleata</taxon>
        <taxon>Spirotrichea</taxon>
        <taxon>Hypotrichia</taxon>
        <taxon>Euplotida</taxon>
        <taxon>Euplotidae</taxon>
        <taxon>Euplotes</taxon>
    </lineage>
</organism>
<evidence type="ECO:0000255" key="1">
    <source>
        <dbReference type="PROSITE-ProRule" id="PRU00332"/>
    </source>
</evidence>
<evidence type="ECO:0000255" key="2">
    <source>
        <dbReference type="PROSITE-ProRule" id="PRU01288"/>
    </source>
</evidence>
<evidence type="ECO:0000256" key="3">
    <source>
        <dbReference type="SAM" id="MobiDB-lite"/>
    </source>
</evidence>
<evidence type="ECO:0000269" key="4">
    <source>
    </source>
</evidence>
<evidence type="ECO:0000269" key="5">
    <source>
    </source>
</evidence>
<evidence type="ECO:0000269" key="6">
    <source>
    </source>
</evidence>
<evidence type="ECO:0000269" key="7">
    <source>
    </source>
</evidence>
<evidence type="ECO:0000303" key="8">
    <source>
    </source>
</evidence>
<evidence type="ECO:0000303" key="9">
    <source>
    </source>
</evidence>
<evidence type="ECO:0000305" key="10"/>
<keyword id="KW-0158">Chromosome</keyword>
<keyword id="KW-0903">Direct protein sequencing</keyword>
<keyword id="KW-0539">Nucleus</keyword>
<keyword id="KW-0688">Ribosomal frameshifting</keyword>
<keyword id="KW-0694">RNA-binding</keyword>
<keyword id="KW-0779">Telomere</keyword>
<protein>
    <recommendedName>
        <fullName evidence="10">La-related protein 7 homolog</fullName>
    </recommendedName>
    <alternativeName>
        <fullName evidence="10">La ribonucleoprotein domain family member 7 homolog</fullName>
    </alternativeName>
    <alternativeName>
        <fullName evidence="8">Telomerase subunit p43</fullName>
    </alternativeName>
</protein>
<reference key="1">
    <citation type="journal article" date="2000" name="EMBO J.">
        <title>Euplotes telomerase contains an La motif protein produced by apparent translational frameshifting.</title>
        <authorList>
            <person name="Aigner S."/>
            <person name="Lingner J."/>
            <person name="Goodrich K.J."/>
            <person name="Grosshans C.A."/>
            <person name="Shevchenko A."/>
            <person name="Mann M."/>
            <person name="Cech T.R."/>
        </authorList>
    </citation>
    <scope>NUCLEOTIDE SEQUENCE [GENOMIC DNA]</scope>
    <scope>PARTIAL PROTEIN SEQUENCE</scope>
    <scope>RIBOSOMAL FRAMESHIFTING</scope>
    <scope>FUNCTION</scope>
    <scope>RNA-BINDING</scope>
    <scope>IDENTIFICATION IN THE TELOMERASE HOLOENZYME COMPLEX</scope>
    <scope>PROTEOLYTIC CLEAVAGE</scope>
</reference>
<reference key="2">
    <citation type="journal article" date="2003" name="Biochemistry">
        <title>The Euplotes La motif protein p43 has properties of a telomerase-specific subunit.</title>
        <authorList>
            <person name="Aigner S."/>
            <person name="Postberg J."/>
            <person name="Lipps H.J."/>
            <person name="Cech T.R."/>
        </authorList>
    </citation>
    <scope>SUBCELLULAR LOCATION</scope>
</reference>
<reference key="3">
    <citation type="journal article" date="2003" name="J. Cell Sci.">
        <title>The telomerase-associated protein p43 is involved in anchoring telomerase in the nucleus.</title>
        <authorList>
            <person name="Moellenbeck M."/>
            <person name="Postberg J."/>
            <person name="Paeschke K."/>
            <person name="Rossbach M."/>
            <person name="Joensson F."/>
            <person name="Lipps H.J."/>
        </authorList>
    </citation>
    <scope>FUNCTION</scope>
    <scope>RNA-BINDING</scope>
    <scope>IDENTIFICATION IN THE TELOMERASE HOLOENZYME COMPLEX</scope>
    <scope>SUBCELLULAR LOCATION</scope>
</reference>
<reference key="4">
    <citation type="journal article" date="2004" name="RNA">
        <title>The Euplotes telomerase subunit p43 stimulates enzymatic activity and processivity in vitro.</title>
        <authorList>
            <person name="Aigner S."/>
            <person name="Cech T.R."/>
        </authorList>
    </citation>
    <scope>FUNCTION</scope>
</reference>
<reference key="5">
    <citation type="journal article" date="2012" name="Mol. Cell">
        <title>Structural basis for telomerase RNA recognition and RNP assembly by the holoenzyme La family protein p65.</title>
        <authorList>
            <person name="Singh M."/>
            <person name="Wang Z."/>
            <person name="Koo B.K."/>
            <person name="Patel A."/>
            <person name="Cascio D."/>
            <person name="Collins K."/>
            <person name="Feigon J."/>
        </authorList>
    </citation>
    <scope>IDENTIFICATION OF THE XRRM DOMAIN</scope>
</reference>
<feature type="chain" id="PRO_0000449906" description="La-related protein 7 homolog">
    <location>
        <begin position="1"/>
        <end position="437"/>
    </location>
</feature>
<feature type="domain" description="HTH La-type RNA-binding" evidence="1">
    <location>
        <begin position="38"/>
        <end position="145"/>
    </location>
</feature>
<feature type="domain" description="xRRM" evidence="2 9">
    <location>
        <begin position="279"/>
        <end position="397"/>
    </location>
</feature>
<feature type="region of interest" description="Disordered" evidence="3">
    <location>
        <begin position="417"/>
        <end position="437"/>
    </location>
</feature>
<feature type="compositionally biased region" description="Basic residues" evidence="3">
    <location>
        <begin position="417"/>
        <end position="427"/>
    </location>
</feature>